<proteinExistence type="inferred from homology"/>
<protein>
    <recommendedName>
        <fullName evidence="1">UDP-3-O-acyl-N-acetylglucosamine deacetylase</fullName>
        <shortName evidence="1">UDP-3-O-acyl-GlcNAc deacetylase</shortName>
        <ecNumber evidence="1">3.5.1.108</ecNumber>
    </recommendedName>
    <alternativeName>
        <fullName evidence="1">UDP-3-O-[R-3-hydroxymyristoyl]-N-acetylglucosamine deacetylase</fullName>
    </alternativeName>
</protein>
<keyword id="KW-0378">Hydrolase</keyword>
<keyword id="KW-0441">Lipid A biosynthesis</keyword>
<keyword id="KW-0444">Lipid biosynthesis</keyword>
<keyword id="KW-0443">Lipid metabolism</keyword>
<keyword id="KW-0479">Metal-binding</keyword>
<keyword id="KW-0862">Zinc</keyword>
<dbReference type="EC" id="3.5.1.108" evidence="1"/>
<dbReference type="EMBL" id="CP000083">
    <property type="protein sequence ID" value="AAZ25459.1"/>
    <property type="molecule type" value="Genomic_DNA"/>
</dbReference>
<dbReference type="RefSeq" id="WP_011045186.1">
    <property type="nucleotide sequence ID" value="NC_003910.7"/>
</dbReference>
<dbReference type="SMR" id="Q47VR7"/>
<dbReference type="STRING" id="167879.CPS_4457"/>
<dbReference type="KEGG" id="cps:CPS_4457"/>
<dbReference type="eggNOG" id="COG0774">
    <property type="taxonomic scope" value="Bacteria"/>
</dbReference>
<dbReference type="HOGENOM" id="CLU_046528_1_0_6"/>
<dbReference type="UniPathway" id="UPA00359">
    <property type="reaction ID" value="UER00478"/>
</dbReference>
<dbReference type="Proteomes" id="UP000000547">
    <property type="component" value="Chromosome"/>
</dbReference>
<dbReference type="GO" id="GO:0016020">
    <property type="term" value="C:membrane"/>
    <property type="evidence" value="ECO:0007669"/>
    <property type="project" value="GOC"/>
</dbReference>
<dbReference type="GO" id="GO:0046872">
    <property type="term" value="F:metal ion binding"/>
    <property type="evidence" value="ECO:0007669"/>
    <property type="project" value="UniProtKB-KW"/>
</dbReference>
<dbReference type="GO" id="GO:0103117">
    <property type="term" value="F:UDP-3-O-acyl-N-acetylglucosamine deacetylase activity"/>
    <property type="evidence" value="ECO:0007669"/>
    <property type="project" value="UniProtKB-UniRule"/>
</dbReference>
<dbReference type="GO" id="GO:0009245">
    <property type="term" value="P:lipid A biosynthetic process"/>
    <property type="evidence" value="ECO:0007669"/>
    <property type="project" value="UniProtKB-UniRule"/>
</dbReference>
<dbReference type="Gene3D" id="3.30.230.20">
    <property type="entry name" value="lpxc deacetylase, domain 1"/>
    <property type="match status" value="1"/>
</dbReference>
<dbReference type="Gene3D" id="3.30.1700.10">
    <property type="entry name" value="lpxc deacetylase, domain 2"/>
    <property type="match status" value="1"/>
</dbReference>
<dbReference type="HAMAP" id="MF_00388">
    <property type="entry name" value="LpxC"/>
    <property type="match status" value="1"/>
</dbReference>
<dbReference type="InterPro" id="IPR020568">
    <property type="entry name" value="Ribosomal_Su5_D2-typ_SF"/>
</dbReference>
<dbReference type="InterPro" id="IPR004463">
    <property type="entry name" value="UDP-acyl_GlcNac_deAcase"/>
</dbReference>
<dbReference type="InterPro" id="IPR011334">
    <property type="entry name" value="UDP-acyl_GlcNac_deAcase_C"/>
</dbReference>
<dbReference type="InterPro" id="IPR015870">
    <property type="entry name" value="UDP-acyl_N-AcGlcN_deAcase_N"/>
</dbReference>
<dbReference type="NCBIfam" id="TIGR00325">
    <property type="entry name" value="lpxC"/>
    <property type="match status" value="1"/>
</dbReference>
<dbReference type="PANTHER" id="PTHR33694">
    <property type="entry name" value="UDP-3-O-ACYL-N-ACETYLGLUCOSAMINE DEACETYLASE 1, MITOCHONDRIAL-RELATED"/>
    <property type="match status" value="1"/>
</dbReference>
<dbReference type="PANTHER" id="PTHR33694:SF1">
    <property type="entry name" value="UDP-3-O-ACYL-N-ACETYLGLUCOSAMINE DEACETYLASE 1, MITOCHONDRIAL-RELATED"/>
    <property type="match status" value="1"/>
</dbReference>
<dbReference type="Pfam" id="PF03331">
    <property type="entry name" value="LpxC"/>
    <property type="match status" value="1"/>
</dbReference>
<dbReference type="SUPFAM" id="SSF54211">
    <property type="entry name" value="Ribosomal protein S5 domain 2-like"/>
    <property type="match status" value="2"/>
</dbReference>
<comment type="function">
    <text evidence="1">Catalyzes the hydrolysis of UDP-3-O-myristoyl-N-acetylglucosamine to form UDP-3-O-myristoylglucosamine and acetate, the committed step in lipid A biosynthesis.</text>
</comment>
<comment type="catalytic activity">
    <reaction evidence="1">
        <text>a UDP-3-O-[(3R)-3-hydroxyacyl]-N-acetyl-alpha-D-glucosamine + H2O = a UDP-3-O-[(3R)-3-hydroxyacyl]-alpha-D-glucosamine + acetate</text>
        <dbReference type="Rhea" id="RHEA:67816"/>
        <dbReference type="ChEBI" id="CHEBI:15377"/>
        <dbReference type="ChEBI" id="CHEBI:30089"/>
        <dbReference type="ChEBI" id="CHEBI:137740"/>
        <dbReference type="ChEBI" id="CHEBI:173225"/>
        <dbReference type="EC" id="3.5.1.108"/>
    </reaction>
</comment>
<comment type="cofactor">
    <cofactor evidence="1">
        <name>Zn(2+)</name>
        <dbReference type="ChEBI" id="CHEBI:29105"/>
    </cofactor>
</comment>
<comment type="pathway">
    <text evidence="1">Glycolipid biosynthesis; lipid IV(A) biosynthesis; lipid IV(A) from (3R)-3-hydroxytetradecanoyl-[acyl-carrier-protein] and UDP-N-acetyl-alpha-D-glucosamine: step 2/6.</text>
</comment>
<comment type="similarity">
    <text evidence="1">Belongs to the LpxC family.</text>
</comment>
<evidence type="ECO:0000255" key="1">
    <source>
        <dbReference type="HAMAP-Rule" id="MF_00388"/>
    </source>
</evidence>
<sequence>MIKQRTLKTSVSTVGVGLHKGEKVQVTLRPAPANTGIVFRRVDLDPVVDIKASPEAVGETTLCTCLVNEQQVKVSTVEHLLSAVAGLGIDNLIIDVDSAEIPIMDGSALPFVYLIQSVGIETLNAPKRFLRIKKPIRVEEGDKWAELLPYEGFRVNFSIEFEHPVIEKTCQTMSMDFSSCSFIKEISRARTFGFMKDIEFLRSHNLALGGSLENAIVLDNYRMLNKNELRYDDEFVKHKILDAIGDLYMGSASILGELNAFKSGHGLNNLLLREVFKRTDSWEWVTYEGDKTSPIEYQEVNATAF</sequence>
<reference key="1">
    <citation type="journal article" date="2005" name="Proc. Natl. Acad. Sci. U.S.A.">
        <title>The psychrophilic lifestyle as revealed by the genome sequence of Colwellia psychrerythraea 34H through genomic and proteomic analyses.</title>
        <authorList>
            <person name="Methe B.A."/>
            <person name="Nelson K.E."/>
            <person name="Deming J.W."/>
            <person name="Momen B."/>
            <person name="Melamud E."/>
            <person name="Zhang X."/>
            <person name="Moult J."/>
            <person name="Madupu R."/>
            <person name="Nelson W.C."/>
            <person name="Dodson R.J."/>
            <person name="Brinkac L.M."/>
            <person name="Daugherty S.C."/>
            <person name="Durkin A.S."/>
            <person name="DeBoy R.T."/>
            <person name="Kolonay J.F."/>
            <person name="Sullivan S.A."/>
            <person name="Zhou L."/>
            <person name="Davidsen T.M."/>
            <person name="Wu M."/>
            <person name="Huston A.L."/>
            <person name="Lewis M."/>
            <person name="Weaver B."/>
            <person name="Weidman J.F."/>
            <person name="Khouri H."/>
            <person name="Utterback T.R."/>
            <person name="Feldblyum T.V."/>
            <person name="Fraser C.M."/>
        </authorList>
    </citation>
    <scope>NUCLEOTIDE SEQUENCE [LARGE SCALE GENOMIC DNA]</scope>
    <source>
        <strain>34H / ATCC BAA-681</strain>
    </source>
</reference>
<organism>
    <name type="scientific">Colwellia psychrerythraea (strain 34H / ATCC BAA-681)</name>
    <name type="common">Vibrio psychroerythus</name>
    <dbReference type="NCBI Taxonomy" id="167879"/>
    <lineage>
        <taxon>Bacteria</taxon>
        <taxon>Pseudomonadati</taxon>
        <taxon>Pseudomonadota</taxon>
        <taxon>Gammaproteobacteria</taxon>
        <taxon>Alteromonadales</taxon>
        <taxon>Colwelliaceae</taxon>
        <taxon>Colwellia</taxon>
    </lineage>
</organism>
<accession>Q47VR7</accession>
<feature type="chain" id="PRO_0000253661" description="UDP-3-O-acyl-N-acetylglucosamine deacetylase">
    <location>
        <begin position="1"/>
        <end position="305"/>
    </location>
</feature>
<feature type="active site" description="Proton donor" evidence="1">
    <location>
        <position position="265"/>
    </location>
</feature>
<feature type="binding site" evidence="1">
    <location>
        <position position="79"/>
    </location>
    <ligand>
        <name>Zn(2+)</name>
        <dbReference type="ChEBI" id="CHEBI:29105"/>
    </ligand>
</feature>
<feature type="binding site" evidence="1">
    <location>
        <position position="238"/>
    </location>
    <ligand>
        <name>Zn(2+)</name>
        <dbReference type="ChEBI" id="CHEBI:29105"/>
    </ligand>
</feature>
<feature type="binding site" evidence="1">
    <location>
        <position position="242"/>
    </location>
    <ligand>
        <name>Zn(2+)</name>
        <dbReference type="ChEBI" id="CHEBI:29105"/>
    </ligand>
</feature>
<gene>
    <name evidence="1" type="primary">lpxC</name>
    <name type="ordered locus">CPS_4457</name>
</gene>
<name>LPXC_COLP3</name>